<feature type="chain" id="PRO_0000315609" description="RAS guanyl-releasing protein 2">
    <location>
        <begin position="1"/>
        <end position="608"/>
    </location>
</feature>
<feature type="domain" description="N-terminal Ras-GEF" evidence="3">
    <location>
        <begin position="4"/>
        <end position="126"/>
    </location>
</feature>
<feature type="domain" description="Ras-GEF" evidence="4">
    <location>
        <begin position="154"/>
        <end position="387"/>
    </location>
</feature>
<feature type="domain" description="EF-hand 1" evidence="6">
    <location>
        <begin position="426"/>
        <end position="461"/>
    </location>
</feature>
<feature type="domain" description="EF-hand 2" evidence="6">
    <location>
        <begin position="463"/>
        <end position="490"/>
    </location>
</feature>
<feature type="zinc finger region" description="Phorbol-ester/DAG-type" evidence="5">
    <location>
        <begin position="498"/>
        <end position="548"/>
    </location>
</feature>
<feature type="region of interest" description="Disordered" evidence="7">
    <location>
        <begin position="382"/>
        <end position="405"/>
    </location>
</feature>
<feature type="region of interest" description="Disordered" evidence="7">
    <location>
        <begin position="555"/>
        <end position="596"/>
    </location>
</feature>
<feature type="binding site" evidence="6">
    <location>
        <position position="439"/>
    </location>
    <ligand>
        <name>Ca(2+)</name>
        <dbReference type="ChEBI" id="CHEBI:29108"/>
        <label>1</label>
    </ligand>
</feature>
<feature type="binding site" evidence="6">
    <location>
        <position position="441"/>
    </location>
    <ligand>
        <name>Ca(2+)</name>
        <dbReference type="ChEBI" id="CHEBI:29108"/>
        <label>1</label>
    </ligand>
</feature>
<feature type="binding site" evidence="6">
    <location>
        <position position="443"/>
    </location>
    <ligand>
        <name>Ca(2+)</name>
        <dbReference type="ChEBI" id="CHEBI:29108"/>
        <label>1</label>
    </ligand>
</feature>
<feature type="binding site" evidence="6">
    <location>
        <position position="445"/>
    </location>
    <ligand>
        <name>Ca(2+)</name>
        <dbReference type="ChEBI" id="CHEBI:29108"/>
        <label>1</label>
    </ligand>
</feature>
<feature type="binding site" evidence="6">
    <location>
        <position position="450"/>
    </location>
    <ligand>
        <name>Ca(2+)</name>
        <dbReference type="ChEBI" id="CHEBI:29108"/>
        <label>1</label>
    </ligand>
</feature>
<feature type="binding site" evidence="6">
    <location>
        <position position="468"/>
    </location>
    <ligand>
        <name>Ca(2+)</name>
        <dbReference type="ChEBI" id="CHEBI:29108"/>
        <label>2</label>
    </ligand>
</feature>
<feature type="binding site" evidence="6">
    <location>
        <position position="470"/>
    </location>
    <ligand>
        <name>Ca(2+)</name>
        <dbReference type="ChEBI" id="CHEBI:29108"/>
        <label>2</label>
    </ligand>
</feature>
<feature type="binding site" evidence="6">
    <location>
        <position position="472"/>
    </location>
    <ligand>
        <name>Ca(2+)</name>
        <dbReference type="ChEBI" id="CHEBI:29108"/>
        <label>2</label>
    </ligand>
</feature>
<feature type="binding site" evidence="6">
    <location>
        <position position="474"/>
    </location>
    <ligand>
        <name>Ca(2+)</name>
        <dbReference type="ChEBI" id="CHEBI:29108"/>
        <label>2</label>
    </ligand>
</feature>
<feature type="binding site" evidence="6">
    <location>
        <position position="479"/>
    </location>
    <ligand>
        <name>Ca(2+)</name>
        <dbReference type="ChEBI" id="CHEBI:29108"/>
        <label>2</label>
    </ligand>
</feature>
<feature type="modified residue" description="Phosphoserine" evidence="21 22">
    <location>
        <position position="116"/>
    </location>
</feature>
<feature type="modified residue" description="Phosphoserine" evidence="21 22">
    <location>
        <position position="117"/>
    </location>
</feature>
<feature type="modified residue" description="Phosphoserine" evidence="22">
    <location>
        <position position="147"/>
    </location>
</feature>
<feature type="modified residue" description="Phosphoserine" evidence="22">
    <location>
        <position position="554"/>
    </location>
</feature>
<feature type="modified residue" description="Phosphoserine" evidence="2">
    <location>
        <position position="575"/>
    </location>
</feature>
<feature type="splice variant" id="VSP_030577" description="In isoform 3." evidence="18">
    <original>PTYKWKRQVTQRNPVEQ</original>
    <variation>CVGAERKGHYACYTICA</variation>
    <location>
        <begin position="125"/>
        <end position="141"/>
    </location>
</feature>
<feature type="splice variant" id="VSP_030578" description="In isoform 3." evidence="18">
    <location>
        <begin position="142"/>
        <end position="608"/>
    </location>
</feature>
<feature type="splice variant" id="VSP_030579" description="In isoform 2." evidence="19">
    <location>
        <begin position="472"/>
        <end position="608"/>
    </location>
</feature>
<feature type="sequence conflict" description="In Ref. 1; AAC79697/AAD12742." evidence="20" ref="1">
    <original>T</original>
    <variation>A</variation>
    <location>
        <position position="2"/>
    </location>
</feature>
<feature type="sequence conflict" description="In Ref. 1; AAC79697/AAD12742." evidence="20" ref="1">
    <original>M</original>
    <variation>V</variation>
    <location>
        <position position="73"/>
    </location>
</feature>
<feature type="sequence conflict" description="In Ref. 1; AAC79697/AAD12742." evidence="20" ref="1">
    <original>I</original>
    <variation>V</variation>
    <location>
        <position position="83"/>
    </location>
</feature>
<feature type="sequence conflict" description="In Ref. 1; AAC79697/AAD12742." evidence="20" ref="1">
    <original>Q</original>
    <variation>P</variation>
    <location>
        <position position="99"/>
    </location>
</feature>
<feature type="sequence conflict" description="In Ref. 1; AAC79697/AAD12742." evidence="20" ref="1">
    <original>R</original>
    <variation>K</variation>
    <location>
        <position position="233"/>
    </location>
</feature>
<feature type="sequence conflict" description="In Ref. 1; AAC79697/AAD12742." evidence="20" ref="1">
    <original>C</original>
    <variation>S</variation>
    <location>
        <position position="339"/>
    </location>
</feature>
<feature type="sequence conflict" description="In Ref. 1; AAC79697/AAD12742." evidence="20" ref="1">
    <original>E</original>
    <variation>D</variation>
    <location>
        <position position="542"/>
    </location>
</feature>
<feature type="sequence conflict" description="In Ref. 1; AAC79697/AAD12742." evidence="20" ref="1">
    <original>S</original>
    <variation>T</variation>
    <location>
        <position position="598"/>
    </location>
</feature>
<organism>
    <name type="scientific">Mus musculus</name>
    <name type="common">Mouse</name>
    <dbReference type="NCBI Taxonomy" id="10090"/>
    <lineage>
        <taxon>Eukaryota</taxon>
        <taxon>Metazoa</taxon>
        <taxon>Chordata</taxon>
        <taxon>Craniata</taxon>
        <taxon>Vertebrata</taxon>
        <taxon>Euteleostomi</taxon>
        <taxon>Mammalia</taxon>
        <taxon>Eutheria</taxon>
        <taxon>Euarchontoglires</taxon>
        <taxon>Glires</taxon>
        <taxon>Rodentia</taxon>
        <taxon>Myomorpha</taxon>
        <taxon>Muroidea</taxon>
        <taxon>Muridae</taxon>
        <taxon>Murinae</taxon>
        <taxon>Mus</taxon>
        <taxon>Mus</taxon>
    </lineage>
</organism>
<dbReference type="EMBL" id="AF081193">
    <property type="protein sequence ID" value="AAC79697.1"/>
    <property type="molecule type" value="mRNA"/>
</dbReference>
<dbReference type="EMBL" id="U78171">
    <property type="protein sequence ID" value="AAD12742.1"/>
    <property type="molecule type" value="mRNA"/>
</dbReference>
<dbReference type="EMBL" id="BC051474">
    <property type="protein sequence ID" value="AAH51474.1"/>
    <property type="molecule type" value="mRNA"/>
</dbReference>
<dbReference type="EMBL" id="AK034683">
    <property type="protein sequence ID" value="BAC28797.1"/>
    <property type="status" value="ALT_INIT"/>
    <property type="molecule type" value="mRNA"/>
</dbReference>
<dbReference type="EMBL" id="Y12339">
    <property type="protein sequence ID" value="CAA73008.1"/>
    <property type="molecule type" value="mRNA"/>
</dbReference>
<dbReference type="CCDS" id="CCDS37898.1">
    <molecule id="Q9QUG9-1"/>
</dbReference>
<dbReference type="CCDS" id="CCDS89325.1">
    <molecule id="Q9QUG9-3"/>
</dbReference>
<dbReference type="RefSeq" id="NP_001351991.1">
    <molecule id="Q9QUG9-3"/>
    <property type="nucleotide sequence ID" value="NM_001365062.1"/>
</dbReference>
<dbReference type="RefSeq" id="NP_001351992.1">
    <molecule id="Q9QUG9-3"/>
    <property type="nucleotide sequence ID" value="NM_001365063.1"/>
</dbReference>
<dbReference type="RefSeq" id="NP_001398160.1">
    <molecule id="Q9QUG9-1"/>
    <property type="nucleotide sequence ID" value="NM_001411231.1"/>
</dbReference>
<dbReference type="RefSeq" id="NP_001398161.1">
    <molecule id="Q9QUG9-1"/>
    <property type="nucleotide sequence ID" value="NM_001411232.1"/>
</dbReference>
<dbReference type="RefSeq" id="NP_035372.2">
    <molecule id="Q9QUG9-1"/>
    <property type="nucleotide sequence ID" value="NM_011242.4"/>
</dbReference>
<dbReference type="RefSeq" id="XP_006531748.1">
    <property type="nucleotide sequence ID" value="XM_006531685.3"/>
</dbReference>
<dbReference type="RefSeq" id="XP_006531749.1">
    <molecule id="Q9QUG9-1"/>
    <property type="nucleotide sequence ID" value="XM_006531686.5"/>
</dbReference>
<dbReference type="RefSeq" id="XP_006531750.1">
    <molecule id="Q9QUG9-1"/>
    <property type="nucleotide sequence ID" value="XM_006531687.2"/>
</dbReference>
<dbReference type="RefSeq" id="XP_006531751.1">
    <molecule id="Q9QUG9-1"/>
    <property type="nucleotide sequence ID" value="XM_006531688.3"/>
</dbReference>
<dbReference type="RefSeq" id="XP_006531752.1">
    <property type="nucleotide sequence ID" value="XM_006531689.3"/>
</dbReference>
<dbReference type="RefSeq" id="XP_006531753.1">
    <molecule id="Q9QUG9-1"/>
    <property type="nucleotide sequence ID" value="XM_006531690.3"/>
</dbReference>
<dbReference type="RefSeq" id="XP_006531754.1">
    <molecule id="Q9QUG9-1"/>
    <property type="nucleotide sequence ID" value="XM_006531691.3"/>
</dbReference>
<dbReference type="RefSeq" id="XP_036017360.1">
    <molecule id="Q9QUG9-3"/>
    <property type="nucleotide sequence ID" value="XM_036161467.1"/>
</dbReference>
<dbReference type="RefSeq" id="XP_036017361.1">
    <molecule id="Q9QUG9-3"/>
    <property type="nucleotide sequence ID" value="XM_036161468.1"/>
</dbReference>
<dbReference type="BMRB" id="Q9QUG9"/>
<dbReference type="SMR" id="Q9QUG9"/>
<dbReference type="FunCoup" id="Q9QUG9">
    <property type="interactions" value="726"/>
</dbReference>
<dbReference type="IntAct" id="Q9QUG9">
    <property type="interactions" value="1"/>
</dbReference>
<dbReference type="MINT" id="Q9QUG9"/>
<dbReference type="STRING" id="10090.ENSMUSP00000109104"/>
<dbReference type="iPTMnet" id="Q9QUG9"/>
<dbReference type="PhosphoSitePlus" id="Q9QUG9"/>
<dbReference type="jPOST" id="Q9QUG9"/>
<dbReference type="PaxDb" id="10090-ENSMUSP00000109104"/>
<dbReference type="PeptideAtlas" id="Q9QUG9"/>
<dbReference type="ProteomicsDB" id="271334">
    <molecule id="Q9QUG9-1"/>
</dbReference>
<dbReference type="ProteomicsDB" id="271335">
    <molecule id="Q9QUG9-2"/>
</dbReference>
<dbReference type="ProteomicsDB" id="271336">
    <molecule id="Q9QUG9-3"/>
</dbReference>
<dbReference type="Antibodypedia" id="2786">
    <property type="antibodies" value="137 antibodies from 27 providers"/>
</dbReference>
<dbReference type="DNASU" id="19395"/>
<dbReference type="Ensembl" id="ENSMUST00000035716.15">
    <molecule id="Q9QUG9-1"/>
    <property type="protein sequence ID" value="ENSMUSP00000041135.9"/>
    <property type="gene ID" value="ENSMUSG00000032946.17"/>
</dbReference>
<dbReference type="Ensembl" id="ENSMUST00000113471.3">
    <molecule id="Q9QUG9-3"/>
    <property type="protein sequence ID" value="ENSMUSP00000109099.2"/>
    <property type="gene ID" value="ENSMUSG00000032946.17"/>
</dbReference>
<dbReference type="Ensembl" id="ENSMUST00000113472.8">
    <molecule id="Q9QUG9-3"/>
    <property type="protein sequence ID" value="ENSMUSP00000109100.2"/>
    <property type="gene ID" value="ENSMUSG00000032946.17"/>
</dbReference>
<dbReference type="Ensembl" id="ENSMUST00000113475.8">
    <molecule id="Q9QUG9-3"/>
    <property type="protein sequence ID" value="ENSMUSP00000109103.2"/>
    <property type="gene ID" value="ENSMUSG00000032946.17"/>
</dbReference>
<dbReference type="Ensembl" id="ENSMUST00000113476.8">
    <molecule id="Q9QUG9-1"/>
    <property type="protein sequence ID" value="ENSMUSP00000109104.2"/>
    <property type="gene ID" value="ENSMUSG00000032946.17"/>
</dbReference>
<dbReference type="Ensembl" id="ENSMUST00000167240.8">
    <molecule id="Q9QUG9-1"/>
    <property type="protein sequence ID" value="ENSMUSP00000129873.2"/>
    <property type="gene ID" value="ENSMUSG00000032946.17"/>
</dbReference>
<dbReference type="GeneID" id="19395"/>
<dbReference type="KEGG" id="mmu:19395"/>
<dbReference type="UCSC" id="uc008gip.1">
    <molecule id="Q9QUG9-1"/>
    <property type="organism name" value="mouse"/>
</dbReference>
<dbReference type="UCSC" id="uc008gir.1">
    <molecule id="Q9QUG9-2"/>
    <property type="organism name" value="mouse"/>
</dbReference>
<dbReference type="AGR" id="MGI:1333849"/>
<dbReference type="CTD" id="10235"/>
<dbReference type="MGI" id="MGI:1333849">
    <property type="gene designation" value="Rasgrp2"/>
</dbReference>
<dbReference type="VEuPathDB" id="HostDB:ENSMUSG00000032946"/>
<dbReference type="eggNOG" id="KOG3417">
    <property type="taxonomic scope" value="Eukaryota"/>
</dbReference>
<dbReference type="GeneTree" id="ENSGT00940000160483"/>
<dbReference type="HOGENOM" id="CLU_019261_1_0_1"/>
<dbReference type="InParanoid" id="Q9QUG9"/>
<dbReference type="OMA" id="LHIYYQQ"/>
<dbReference type="OrthoDB" id="74314at2759"/>
<dbReference type="PhylomeDB" id="Q9QUG9"/>
<dbReference type="TreeFam" id="TF312918"/>
<dbReference type="Reactome" id="R-MMU-354192">
    <property type="pathway name" value="Integrin signaling"/>
</dbReference>
<dbReference type="Reactome" id="R-MMU-392517">
    <property type="pathway name" value="Rap1 signalling"/>
</dbReference>
<dbReference type="BioGRID-ORCS" id="19395">
    <property type="hits" value="0 hits in 75 CRISPR screens"/>
</dbReference>
<dbReference type="PRO" id="PR:Q9QUG9"/>
<dbReference type="Proteomes" id="UP000000589">
    <property type="component" value="Chromosome 19"/>
</dbReference>
<dbReference type="RNAct" id="Q9QUG9">
    <property type="molecule type" value="protein"/>
</dbReference>
<dbReference type="Bgee" id="ENSMUSG00000032946">
    <property type="expression patterns" value="Expressed in granulocyte and 62 other cell types or tissues"/>
</dbReference>
<dbReference type="ExpressionAtlas" id="Q9QUG9">
    <property type="expression patterns" value="baseline and differential"/>
</dbReference>
<dbReference type="GO" id="GO:0005829">
    <property type="term" value="C:cytosol"/>
    <property type="evidence" value="ECO:0000250"/>
    <property type="project" value="UniProtKB"/>
</dbReference>
<dbReference type="GO" id="GO:0043005">
    <property type="term" value="C:neuron projection"/>
    <property type="evidence" value="ECO:0007669"/>
    <property type="project" value="UniProtKB-KW"/>
</dbReference>
<dbReference type="GO" id="GO:0005886">
    <property type="term" value="C:plasma membrane"/>
    <property type="evidence" value="ECO:0000250"/>
    <property type="project" value="UniProtKB"/>
</dbReference>
<dbReference type="GO" id="GO:0032587">
    <property type="term" value="C:ruffle membrane"/>
    <property type="evidence" value="ECO:0007669"/>
    <property type="project" value="UniProtKB-SubCell"/>
</dbReference>
<dbReference type="GO" id="GO:0045202">
    <property type="term" value="C:synapse"/>
    <property type="evidence" value="ECO:0007669"/>
    <property type="project" value="UniProtKB-SubCell"/>
</dbReference>
<dbReference type="GO" id="GO:0005509">
    <property type="term" value="F:calcium ion binding"/>
    <property type="evidence" value="ECO:0007669"/>
    <property type="project" value="InterPro"/>
</dbReference>
<dbReference type="GO" id="GO:0005085">
    <property type="term" value="F:guanyl-nucleotide exchange factor activity"/>
    <property type="evidence" value="ECO:0007669"/>
    <property type="project" value="UniProtKB-KW"/>
</dbReference>
<dbReference type="GO" id="GO:0008270">
    <property type="term" value="F:zinc ion binding"/>
    <property type="evidence" value="ECO:0007669"/>
    <property type="project" value="UniProtKB-KW"/>
</dbReference>
<dbReference type="GO" id="GO:0071277">
    <property type="term" value="P:cellular response to calcium ion"/>
    <property type="evidence" value="ECO:0007669"/>
    <property type="project" value="Ensembl"/>
</dbReference>
<dbReference type="GO" id="GO:0007264">
    <property type="term" value="P:small GTPase-mediated signal transduction"/>
    <property type="evidence" value="ECO:0007669"/>
    <property type="project" value="InterPro"/>
</dbReference>
<dbReference type="CDD" id="cd20861">
    <property type="entry name" value="C1_RASGRP2"/>
    <property type="match status" value="1"/>
</dbReference>
<dbReference type="CDD" id="cd00051">
    <property type="entry name" value="EFh"/>
    <property type="match status" value="1"/>
</dbReference>
<dbReference type="CDD" id="cd00155">
    <property type="entry name" value="RasGEF"/>
    <property type="match status" value="1"/>
</dbReference>
<dbReference type="CDD" id="cd06224">
    <property type="entry name" value="REM"/>
    <property type="match status" value="1"/>
</dbReference>
<dbReference type="FunFam" id="3.30.60.20:FF:000023">
    <property type="entry name" value="RAS guanyl-releasing protein 1 isoform X1"/>
    <property type="match status" value="1"/>
</dbReference>
<dbReference type="FunFam" id="1.20.870.10:FF:000011">
    <property type="entry name" value="RAS guanyl-releasing protein 2 isoform X1"/>
    <property type="match status" value="1"/>
</dbReference>
<dbReference type="FunFam" id="1.10.840.10:FF:000003">
    <property type="entry name" value="Ras guanyl-releasing protein 3 isoform 1"/>
    <property type="match status" value="1"/>
</dbReference>
<dbReference type="Gene3D" id="3.30.60.20">
    <property type="match status" value="1"/>
</dbReference>
<dbReference type="Gene3D" id="1.10.238.10">
    <property type="entry name" value="EF-hand"/>
    <property type="match status" value="1"/>
</dbReference>
<dbReference type="Gene3D" id="1.10.840.10">
    <property type="entry name" value="Ras guanine-nucleotide exchange factors catalytic domain"/>
    <property type="match status" value="1"/>
</dbReference>
<dbReference type="Gene3D" id="1.20.870.10">
    <property type="entry name" value="Son of sevenless (SoS) protein Chain: S domain 1"/>
    <property type="match status" value="1"/>
</dbReference>
<dbReference type="InterPro" id="IPR046349">
    <property type="entry name" value="C1-like_sf"/>
</dbReference>
<dbReference type="InterPro" id="IPR011992">
    <property type="entry name" value="EF-hand-dom_pair"/>
</dbReference>
<dbReference type="InterPro" id="IPR018247">
    <property type="entry name" value="EF_Hand_1_Ca_BS"/>
</dbReference>
<dbReference type="InterPro" id="IPR002048">
    <property type="entry name" value="EF_hand_dom"/>
</dbReference>
<dbReference type="InterPro" id="IPR002219">
    <property type="entry name" value="PE/DAG-bd"/>
</dbReference>
<dbReference type="InterPro" id="IPR008937">
    <property type="entry name" value="Ras-like_GEF"/>
</dbReference>
<dbReference type="InterPro" id="IPR000651">
    <property type="entry name" value="Ras-like_Gua-exchang_fac_N"/>
</dbReference>
<dbReference type="InterPro" id="IPR023578">
    <property type="entry name" value="Ras_GEF_dom_sf"/>
</dbReference>
<dbReference type="InterPro" id="IPR001895">
    <property type="entry name" value="RASGEF_cat_dom"/>
</dbReference>
<dbReference type="InterPro" id="IPR036964">
    <property type="entry name" value="RASGEF_cat_dom_sf"/>
</dbReference>
<dbReference type="PANTHER" id="PTHR23113">
    <property type="entry name" value="GUANINE NUCLEOTIDE EXCHANGE FACTOR"/>
    <property type="match status" value="1"/>
</dbReference>
<dbReference type="PANTHER" id="PTHR23113:SF16">
    <property type="entry name" value="RAS GUANYL-RELEASING PROTEIN 2"/>
    <property type="match status" value="1"/>
</dbReference>
<dbReference type="Pfam" id="PF00130">
    <property type="entry name" value="C1_1"/>
    <property type="match status" value="1"/>
</dbReference>
<dbReference type="Pfam" id="PF13499">
    <property type="entry name" value="EF-hand_7"/>
    <property type="match status" value="1"/>
</dbReference>
<dbReference type="Pfam" id="PF00617">
    <property type="entry name" value="RasGEF"/>
    <property type="match status" value="1"/>
</dbReference>
<dbReference type="Pfam" id="PF00618">
    <property type="entry name" value="RasGEF_N"/>
    <property type="match status" value="1"/>
</dbReference>
<dbReference type="SMART" id="SM00109">
    <property type="entry name" value="C1"/>
    <property type="match status" value="1"/>
</dbReference>
<dbReference type="SMART" id="SM00054">
    <property type="entry name" value="EFh"/>
    <property type="match status" value="2"/>
</dbReference>
<dbReference type="SMART" id="SM00147">
    <property type="entry name" value="RasGEF"/>
    <property type="match status" value="1"/>
</dbReference>
<dbReference type="SMART" id="SM00229">
    <property type="entry name" value="RasGEFN"/>
    <property type="match status" value="1"/>
</dbReference>
<dbReference type="SUPFAM" id="SSF57889">
    <property type="entry name" value="Cysteine-rich domain"/>
    <property type="match status" value="1"/>
</dbReference>
<dbReference type="SUPFAM" id="SSF47473">
    <property type="entry name" value="EF-hand"/>
    <property type="match status" value="1"/>
</dbReference>
<dbReference type="SUPFAM" id="SSF48366">
    <property type="entry name" value="Ras GEF"/>
    <property type="match status" value="1"/>
</dbReference>
<dbReference type="PROSITE" id="PS00018">
    <property type="entry name" value="EF_HAND_1"/>
    <property type="match status" value="2"/>
</dbReference>
<dbReference type="PROSITE" id="PS50222">
    <property type="entry name" value="EF_HAND_2"/>
    <property type="match status" value="2"/>
</dbReference>
<dbReference type="PROSITE" id="PS50009">
    <property type="entry name" value="RASGEF_CAT"/>
    <property type="match status" value="1"/>
</dbReference>
<dbReference type="PROSITE" id="PS50212">
    <property type="entry name" value="RASGEF_NTER"/>
    <property type="match status" value="1"/>
</dbReference>
<dbReference type="PROSITE" id="PS00479">
    <property type="entry name" value="ZF_DAG_PE_1"/>
    <property type="match status" value="1"/>
</dbReference>
<dbReference type="PROSITE" id="PS50081">
    <property type="entry name" value="ZF_DAG_PE_2"/>
    <property type="match status" value="1"/>
</dbReference>
<proteinExistence type="evidence at protein level"/>
<name>GRP2_MOUSE</name>
<reference key="1">
    <citation type="journal article" date="1998" name="Proc. Natl. Acad. Sci. U.S.A.">
        <title>A Rap guanine nucleotide exchange factor enriched highly in the basal ganglia.</title>
        <authorList>
            <person name="Kawasaki H."/>
            <person name="Springett G.M."/>
            <person name="Toki S."/>
            <person name="Canales J.J."/>
            <person name="Harlan P."/>
            <person name="Blumenstiel J.P."/>
            <person name="Chen E.J."/>
            <person name="Bany I.A."/>
            <person name="Mochizuki N."/>
            <person name="Ashbacher A."/>
            <person name="Matsuda M."/>
            <person name="Housman D.E."/>
            <person name="Graybiel A.M."/>
        </authorList>
    </citation>
    <scope>NUCLEOTIDE SEQUENCE [MRNA] (ISOFORM 1)</scope>
    <scope>FUNCTION AS A RAP ACTIVATOR</scope>
</reference>
<reference key="2">
    <citation type="journal article" date="2004" name="Genome Res.">
        <title>The status, quality, and expansion of the NIH full-length cDNA project: the Mammalian Gene Collection (MGC).</title>
        <authorList>
            <consortium name="The MGC Project Team"/>
        </authorList>
    </citation>
    <scope>NUCLEOTIDE SEQUENCE [LARGE SCALE MRNA] (ISOFORM 3)</scope>
    <source>
        <strain>C57BL/6J</strain>
        <tissue>Mammary gland</tissue>
    </source>
</reference>
<reference key="3">
    <citation type="journal article" date="2005" name="Science">
        <title>The transcriptional landscape of the mammalian genome.</title>
        <authorList>
            <person name="Carninci P."/>
            <person name="Kasukawa T."/>
            <person name="Katayama S."/>
            <person name="Gough J."/>
            <person name="Frith M.C."/>
            <person name="Maeda N."/>
            <person name="Oyama R."/>
            <person name="Ravasi T."/>
            <person name="Lenhard B."/>
            <person name="Wells C."/>
            <person name="Kodzius R."/>
            <person name="Shimokawa K."/>
            <person name="Bajic V.B."/>
            <person name="Brenner S.E."/>
            <person name="Batalov S."/>
            <person name="Forrest A.R."/>
            <person name="Zavolan M."/>
            <person name="Davis M.J."/>
            <person name="Wilming L.G."/>
            <person name="Aidinis V."/>
            <person name="Allen J.E."/>
            <person name="Ambesi-Impiombato A."/>
            <person name="Apweiler R."/>
            <person name="Aturaliya R.N."/>
            <person name="Bailey T.L."/>
            <person name="Bansal M."/>
            <person name="Baxter L."/>
            <person name="Beisel K.W."/>
            <person name="Bersano T."/>
            <person name="Bono H."/>
            <person name="Chalk A.M."/>
            <person name="Chiu K.P."/>
            <person name="Choudhary V."/>
            <person name="Christoffels A."/>
            <person name="Clutterbuck D.R."/>
            <person name="Crowe M.L."/>
            <person name="Dalla E."/>
            <person name="Dalrymple B.P."/>
            <person name="de Bono B."/>
            <person name="Della Gatta G."/>
            <person name="di Bernardo D."/>
            <person name="Down T."/>
            <person name="Engstrom P."/>
            <person name="Fagiolini M."/>
            <person name="Faulkner G."/>
            <person name="Fletcher C.F."/>
            <person name="Fukushima T."/>
            <person name="Furuno M."/>
            <person name="Futaki S."/>
            <person name="Gariboldi M."/>
            <person name="Georgii-Hemming P."/>
            <person name="Gingeras T.R."/>
            <person name="Gojobori T."/>
            <person name="Green R.E."/>
            <person name="Gustincich S."/>
            <person name="Harbers M."/>
            <person name="Hayashi Y."/>
            <person name="Hensch T.K."/>
            <person name="Hirokawa N."/>
            <person name="Hill D."/>
            <person name="Huminiecki L."/>
            <person name="Iacono M."/>
            <person name="Ikeo K."/>
            <person name="Iwama A."/>
            <person name="Ishikawa T."/>
            <person name="Jakt M."/>
            <person name="Kanapin A."/>
            <person name="Katoh M."/>
            <person name="Kawasawa Y."/>
            <person name="Kelso J."/>
            <person name="Kitamura H."/>
            <person name="Kitano H."/>
            <person name="Kollias G."/>
            <person name="Krishnan S.P."/>
            <person name="Kruger A."/>
            <person name="Kummerfeld S.K."/>
            <person name="Kurochkin I.V."/>
            <person name="Lareau L.F."/>
            <person name="Lazarevic D."/>
            <person name="Lipovich L."/>
            <person name="Liu J."/>
            <person name="Liuni S."/>
            <person name="McWilliam S."/>
            <person name="Madan Babu M."/>
            <person name="Madera M."/>
            <person name="Marchionni L."/>
            <person name="Matsuda H."/>
            <person name="Matsuzawa S."/>
            <person name="Miki H."/>
            <person name="Mignone F."/>
            <person name="Miyake S."/>
            <person name="Morris K."/>
            <person name="Mottagui-Tabar S."/>
            <person name="Mulder N."/>
            <person name="Nakano N."/>
            <person name="Nakauchi H."/>
            <person name="Ng P."/>
            <person name="Nilsson R."/>
            <person name="Nishiguchi S."/>
            <person name="Nishikawa S."/>
            <person name="Nori F."/>
            <person name="Ohara O."/>
            <person name="Okazaki Y."/>
            <person name="Orlando V."/>
            <person name="Pang K.C."/>
            <person name="Pavan W.J."/>
            <person name="Pavesi G."/>
            <person name="Pesole G."/>
            <person name="Petrovsky N."/>
            <person name="Piazza S."/>
            <person name="Reed J."/>
            <person name="Reid J.F."/>
            <person name="Ring B.Z."/>
            <person name="Ringwald M."/>
            <person name="Rost B."/>
            <person name="Ruan Y."/>
            <person name="Salzberg S.L."/>
            <person name="Sandelin A."/>
            <person name="Schneider C."/>
            <person name="Schoenbach C."/>
            <person name="Sekiguchi K."/>
            <person name="Semple C.A."/>
            <person name="Seno S."/>
            <person name="Sessa L."/>
            <person name="Sheng Y."/>
            <person name="Shibata Y."/>
            <person name="Shimada H."/>
            <person name="Shimada K."/>
            <person name="Silva D."/>
            <person name="Sinclair B."/>
            <person name="Sperling S."/>
            <person name="Stupka E."/>
            <person name="Sugiura K."/>
            <person name="Sultana R."/>
            <person name="Takenaka Y."/>
            <person name="Taki K."/>
            <person name="Tammoja K."/>
            <person name="Tan S.L."/>
            <person name="Tang S."/>
            <person name="Taylor M.S."/>
            <person name="Tegner J."/>
            <person name="Teichmann S.A."/>
            <person name="Ueda H.R."/>
            <person name="van Nimwegen E."/>
            <person name="Verardo R."/>
            <person name="Wei C.L."/>
            <person name="Yagi K."/>
            <person name="Yamanishi H."/>
            <person name="Zabarovsky E."/>
            <person name="Zhu S."/>
            <person name="Zimmer A."/>
            <person name="Hide W."/>
            <person name="Bult C."/>
            <person name="Grimmond S.M."/>
            <person name="Teasdale R.D."/>
            <person name="Liu E.T."/>
            <person name="Brusic V."/>
            <person name="Quackenbush J."/>
            <person name="Wahlestedt C."/>
            <person name="Mattick J.S."/>
            <person name="Hume D.A."/>
            <person name="Kai C."/>
            <person name="Sasaki D."/>
            <person name="Tomaru Y."/>
            <person name="Fukuda S."/>
            <person name="Kanamori-Katayama M."/>
            <person name="Suzuki M."/>
            <person name="Aoki J."/>
            <person name="Arakawa T."/>
            <person name="Iida J."/>
            <person name="Imamura K."/>
            <person name="Itoh M."/>
            <person name="Kato T."/>
            <person name="Kawaji H."/>
            <person name="Kawagashira N."/>
            <person name="Kawashima T."/>
            <person name="Kojima M."/>
            <person name="Kondo S."/>
            <person name="Konno H."/>
            <person name="Nakano K."/>
            <person name="Ninomiya N."/>
            <person name="Nishio T."/>
            <person name="Okada M."/>
            <person name="Plessy C."/>
            <person name="Shibata K."/>
            <person name="Shiraki T."/>
            <person name="Suzuki S."/>
            <person name="Tagami M."/>
            <person name="Waki K."/>
            <person name="Watahiki A."/>
            <person name="Okamura-Oho Y."/>
            <person name="Suzuki H."/>
            <person name="Kawai J."/>
            <person name="Hayashizaki Y."/>
        </authorList>
    </citation>
    <scope>NUCLEOTIDE SEQUENCE [LARGE SCALE MRNA] OF 204-608 (ISOFORM 2)</scope>
    <source>
        <strain>C57BL/6J</strain>
        <tissue>Embryo</tissue>
    </source>
</reference>
<reference key="4">
    <citation type="journal article" date="1997" name="Hum. Genet.">
        <title>The germinal centre kinase gene and a novel CDC25-like gene are located in the vicinity of the PYGM gene on 11q13.</title>
        <authorList>
            <person name="Kedra D."/>
            <person name="Seroussi E."/>
            <person name="Fransson I."/>
            <person name="Trifunovic J."/>
            <person name="Clark M."/>
            <person name="Lagercrantz J."/>
            <person name="Blennow E."/>
            <person name="Mehlin H."/>
            <person name="Dumanski J."/>
        </authorList>
    </citation>
    <scope>NUCLEOTIDE SEQUENCE [MRNA] OF 349-608 (ISOFORM 1)</scope>
</reference>
<reference key="5">
    <citation type="journal article" date="2000" name="J. Biol. Chem.">
        <title>Regulatory proteins of R-Ras, TC21/R-Ras2, and M-Ras/R-Ras3.</title>
        <authorList>
            <person name="Ohba Y."/>
            <person name="Mochizuki N."/>
            <person name="Yamashita S."/>
            <person name="Chan A.M."/>
            <person name="Schrader J.W."/>
            <person name="Hattori S."/>
            <person name="Nagashima K."/>
            <person name="Matsuda M."/>
        </authorList>
    </citation>
    <scope>FUNCTION</scope>
</reference>
<reference key="6">
    <citation type="journal article" date="2000" name="J. Biol. Chem.">
        <title>CalDAG-GEFIII activation of Ras, R-ras, and Rap1.</title>
        <authorList>
            <person name="Yamashita S."/>
            <person name="Mochizuki N."/>
            <person name="Ohba Y."/>
            <person name="Tobiume M."/>
            <person name="Okada Y."/>
            <person name="Sawa H."/>
            <person name="Nagashima K."/>
            <person name="Matsuda M."/>
        </authorList>
    </citation>
    <scope>TISSUE SPECIFICITY</scope>
</reference>
<reference key="7">
    <citation type="journal article" date="2000" name="Mol. Cell. Biol.">
        <title>Rap2 as a slowly responding molecular switch in the Rap1 signaling cascade.</title>
        <authorList>
            <person name="Ohba Y."/>
            <person name="Mochizuki N."/>
            <person name="Matsuo K."/>
            <person name="Yamashita S."/>
            <person name="Nakaya M."/>
            <person name="Hashimoto Y."/>
            <person name="Hamaguchi M."/>
            <person name="Kurata T."/>
            <person name="Nagashima K."/>
            <person name="Matsuda M."/>
        </authorList>
    </citation>
    <scope>FUNCTION AS RAP2 ACTIVATOR</scope>
</reference>
<reference key="8">
    <citation type="journal article" date="2001" name="EMBO J.">
        <title>Requirement for C3G-dependent Rap1 activation for cell adhesion and embryogenesis.</title>
        <authorList>
            <person name="Ohba Y."/>
            <person name="Ikuta K."/>
            <person name="Ogura A."/>
            <person name="Matsuda J."/>
            <person name="Mochizuki N."/>
            <person name="Nagashima K."/>
            <person name="Kurokawa K."/>
            <person name="Mayer B.J."/>
            <person name="Maki K."/>
            <person name="Miyazaki J."/>
            <person name="Matsuda M."/>
        </authorList>
    </citation>
    <scope>FUNCTION</scope>
</reference>
<reference key="9">
    <citation type="journal article" date="2001" name="J. Biol. Chem.">
        <title>Activation of the Rap1 guanine nucleotide exchange gene, CalDAG-GEF I, in BXH-2 murine myeloid leukemia.</title>
        <authorList>
            <person name="Dupuy A.J."/>
            <person name="Morgan K."/>
            <person name="von Lintig F.C."/>
            <person name="Shen H."/>
            <person name="Acar H."/>
            <person name="Hasz D.E."/>
            <person name="Jenkins N.A."/>
            <person name="Copeland N.G."/>
            <person name="Boss G.R."/>
            <person name="Largaespada D.A."/>
        </authorList>
    </citation>
    <scope>FUNCTION</scope>
    <scope>ALTERNATIVE SPLICING</scope>
    <scope>TISSUE SPECIFICITY</scope>
    <scope>DEVELOPMENTAL STAGE</scope>
</reference>
<reference key="10">
    <citation type="journal article" date="2002" name="Proc. Natl. Acad. Sci. U.S.A.">
        <title>Megakaryocytes derived from embryonic stem cells implicate CalDAG-GEFI in integrin signaling.</title>
        <authorList>
            <person name="Eto K."/>
            <person name="Murphy R."/>
            <person name="Kerrigan S.W."/>
            <person name="Bertoni A."/>
            <person name="Stuhlmann H."/>
            <person name="Nakano T."/>
            <person name="Leavitt A.D."/>
            <person name="Shattil S.J."/>
        </authorList>
    </citation>
    <scope>FUNCTION</scope>
</reference>
<reference key="11">
    <citation type="journal article" date="2004" name="Nat. Med.">
        <title>CalDAG-GEFI integrates signaling for platelet aggregation and thrombus formation.</title>
        <authorList>
            <person name="Crittenden J.R."/>
            <person name="Bergmeier W."/>
            <person name="Zhang Y."/>
            <person name="Piffath C.L."/>
            <person name="Liang Y."/>
            <person name="Wagner D.D."/>
            <person name="Housman D.E."/>
            <person name="Graybiel A.M."/>
        </authorList>
    </citation>
    <scope>FUNCTION IN PLATELET AGGREGATION</scope>
    <scope>DISRUPTION PHENOTYPE</scope>
    <scope>INTERACTION WITH RAP1</scope>
    <scope>TISSUE SPECIFICITY</scope>
</reference>
<reference key="12">
    <citation type="journal article" date="2006" name="Blood">
        <title>The small GTPase Rap1b regulates the cross talk between platelet integrin alpha2beta1 and integrin alphaIIbbeta3.</title>
        <authorList>
            <person name="Bernardi B."/>
            <person name="Guidetti G.F."/>
            <person name="Campus F."/>
            <person name="Crittenden J.R."/>
            <person name="Graybiel A.M."/>
            <person name="Balduini C."/>
            <person name="Torti M."/>
        </authorList>
    </citation>
    <scope>FUNCTION</scope>
</reference>
<reference key="13">
    <citation type="journal article" date="2007" name="J. Clin. Invest.">
        <title>Mice lacking the signaling molecule CalDAG-GEFI represent a model for leukocyte adhesion deficiency type III.</title>
        <authorList>
            <person name="Bergmeier W."/>
            <person name="Goerge T."/>
            <person name="Wang H.-W."/>
            <person name="Crittenden J.R."/>
            <person name="Baldwin A.C.W."/>
            <person name="Cifuni S.M."/>
            <person name="Housman D.E."/>
            <person name="Graybiel A.M."/>
            <person name="Wagner D.D."/>
        </authorList>
    </citation>
    <scope>FUNCTION</scope>
    <scope>DISRUPTION PHENOTYPE</scope>
</reference>
<reference key="14">
    <citation type="journal article" date="2007" name="Proc. Natl. Acad. Sci. U.S.A.">
        <title>Large-scale phosphorylation analysis of mouse liver.</title>
        <authorList>
            <person name="Villen J."/>
            <person name="Beausoleil S.A."/>
            <person name="Gerber S.A."/>
            <person name="Gygi S.P."/>
        </authorList>
    </citation>
    <scope>PHOSPHORYLATION [LARGE SCALE ANALYSIS] AT SER-116 AND SER-117</scope>
    <scope>IDENTIFICATION BY MASS SPECTROMETRY [LARGE SCALE ANALYSIS]</scope>
    <source>
        <tissue>Liver</tissue>
    </source>
</reference>
<reference key="15">
    <citation type="journal article" date="2010" name="Cell">
        <title>A tissue-specific atlas of mouse protein phosphorylation and expression.</title>
        <authorList>
            <person name="Huttlin E.L."/>
            <person name="Jedrychowski M.P."/>
            <person name="Elias J.E."/>
            <person name="Goswami T."/>
            <person name="Rad R."/>
            <person name="Beausoleil S.A."/>
            <person name="Villen J."/>
            <person name="Haas W."/>
            <person name="Sowa M.E."/>
            <person name="Gygi S.P."/>
        </authorList>
    </citation>
    <scope>PHOSPHORYLATION [LARGE SCALE ANALYSIS] AT SER-116; SER-117; SER-147 AND SER-554</scope>
    <scope>IDENTIFICATION BY MASS SPECTROMETRY [LARGE SCALE ANALYSIS]</scope>
    <source>
        <tissue>Brain</tissue>
        <tissue>Brown adipose tissue</tissue>
        <tissue>Heart</tissue>
        <tissue>Kidney</tissue>
        <tissue>Liver</tissue>
        <tissue>Lung</tissue>
        <tissue>Spleen</tissue>
    </source>
</reference>
<accession>Q9QUG9</accession>
<accession>O09004</accession>
<accession>Q80WC0</accession>
<accession>Q8BSC8</accession>
<keyword id="KW-0025">Alternative splicing</keyword>
<keyword id="KW-0106">Calcium</keyword>
<keyword id="KW-1003">Cell membrane</keyword>
<keyword id="KW-0966">Cell projection</keyword>
<keyword id="KW-0963">Cytoplasm</keyword>
<keyword id="KW-0344">Guanine-nucleotide releasing factor</keyword>
<keyword id="KW-0472">Membrane</keyword>
<keyword id="KW-0479">Metal-binding</keyword>
<keyword id="KW-0597">Phosphoprotein</keyword>
<keyword id="KW-1185">Reference proteome</keyword>
<keyword id="KW-0677">Repeat</keyword>
<keyword id="KW-0770">Synapse</keyword>
<keyword id="KW-0771">Synaptosome</keyword>
<keyword id="KW-0862">Zinc</keyword>
<keyword id="KW-0863">Zinc-finger</keyword>
<evidence type="ECO:0000250" key="1"/>
<evidence type="ECO:0000250" key="2">
    <source>
        <dbReference type="UniProtKB" id="P0C643"/>
    </source>
</evidence>
<evidence type="ECO:0000255" key="3">
    <source>
        <dbReference type="PROSITE-ProRule" id="PRU00135"/>
    </source>
</evidence>
<evidence type="ECO:0000255" key="4">
    <source>
        <dbReference type="PROSITE-ProRule" id="PRU00168"/>
    </source>
</evidence>
<evidence type="ECO:0000255" key="5">
    <source>
        <dbReference type="PROSITE-ProRule" id="PRU00226"/>
    </source>
</evidence>
<evidence type="ECO:0000255" key="6">
    <source>
        <dbReference type="PROSITE-ProRule" id="PRU00448"/>
    </source>
</evidence>
<evidence type="ECO:0000256" key="7">
    <source>
        <dbReference type="SAM" id="MobiDB-lite"/>
    </source>
</evidence>
<evidence type="ECO:0000269" key="8">
    <source>
    </source>
</evidence>
<evidence type="ECO:0000269" key="9">
    <source>
    </source>
</evidence>
<evidence type="ECO:0000269" key="10">
    <source>
    </source>
</evidence>
<evidence type="ECO:0000269" key="11">
    <source>
    </source>
</evidence>
<evidence type="ECO:0000269" key="12">
    <source>
    </source>
</evidence>
<evidence type="ECO:0000269" key="13">
    <source>
    </source>
</evidence>
<evidence type="ECO:0000269" key="14">
    <source>
    </source>
</evidence>
<evidence type="ECO:0000269" key="15">
    <source>
    </source>
</evidence>
<evidence type="ECO:0000269" key="16">
    <source>
    </source>
</evidence>
<evidence type="ECO:0000269" key="17">
    <source>
    </source>
</evidence>
<evidence type="ECO:0000303" key="18">
    <source>
    </source>
</evidence>
<evidence type="ECO:0000303" key="19">
    <source>
    </source>
</evidence>
<evidence type="ECO:0000305" key="20"/>
<evidence type="ECO:0007744" key="21">
    <source>
    </source>
</evidence>
<evidence type="ECO:0007744" key="22">
    <source>
    </source>
</evidence>
<comment type="function">
    <text evidence="8 10 11 12 13 14 15 16 17">Functions as a calcium- and DAG-regulated nucleotide exchange factor specifically activating Rap through the exchange of bound GDP for GTP. May also activate other GTPases such as RRAS, RRAS2, NRAS, KRAS but not HRAS. Functions in aggregation of platelets and adhesion of T-lymphocytes and neutrophils probably through inside-out integrin activation. May function in the muscarinic acetylcholine receptor M1/CHRM1 signaling pathway.</text>
</comment>
<comment type="subunit">
    <text evidence="1 14">Forms a signaling complex with RAP1 and BRAF. Interacts with F-actin (By similarity). Interacts with RAP1.</text>
</comment>
<comment type="subcellular location">
    <subcellularLocation>
        <location evidence="1">Cytoplasm</location>
        <location evidence="1">Cytosol</location>
    </subcellularLocation>
    <subcellularLocation>
        <location evidence="1">Cell membrane</location>
        <topology evidence="1">Peripheral membrane protein</topology>
    </subcellularLocation>
    <subcellularLocation>
        <location evidence="1">Synapse</location>
        <location evidence="1">Synaptosome</location>
    </subcellularLocation>
    <subcellularLocation>
        <location evidence="20">Cell projection</location>
        <location evidence="20">Ruffle membrane</location>
        <topology evidence="20">Peripheral membrane protein</topology>
    </subcellularLocation>
    <text evidence="1">Found both in the cytosol and associated with membranes. Enriched at juxtamembrane areas and membrane ruffles. Localizes to the cell bodies and axons of striatal neurons.</text>
</comment>
<comment type="alternative products">
    <event type="alternative splicing"/>
    <isoform>
        <id>Q9QUG9-1</id>
        <name>1</name>
        <name>CalDAG-GEF1a</name>
        <sequence type="displayed"/>
    </isoform>
    <isoform>
        <id>Q9QUG9-2</id>
        <name>2</name>
        <sequence type="described" ref="VSP_030579"/>
    </isoform>
    <isoform>
        <id>Q9QUG9-3</id>
        <name>3</name>
        <name>CalDAG-GEF1b</name>
        <sequence type="described" ref="VSP_030577 VSP_030578"/>
    </isoform>
</comment>
<comment type="tissue specificity">
    <text evidence="9 11 14">Detected in megakaryocytes, platelet and neutrophils but not in lymphocytes (at protein level). Isoform 1 and isoform 3 are detected in brain basal glanglia, heart, lung, spleen, liver and kidney interstitial cells.</text>
</comment>
<comment type="developmental stage">
    <text evidence="11">Expressed in embryo with higher expression between 15 dpc and 17 dpc.</text>
</comment>
<comment type="domain">
    <text evidence="1">The N-terminal Ras-GEF domain mediates association with F-actin.</text>
</comment>
<comment type="disruption phenotype">
    <text evidence="14 16">Mice have a combination of defects in leukocytes and platelet functions which are reminiscent of the human leukocyte adhesion deficiency type III syndrome (LAD3). They display bleeding diathesis due to a defect in platelet aggregation and are resistant to collagen-induced thrombosis. In parallel, they also display impaired response to acute inflammation associated with defects in beta-1 and beta-2 integrin-mediated adhesion of neutrophils.</text>
</comment>
<comment type="miscellaneous">
    <molecule>Isoform 3</molecule>
    <text evidence="20">The corresponding protein is not undetectable.</text>
</comment>
<comment type="similarity">
    <text evidence="20">Belongs to the RASGRP family.</text>
</comment>
<comment type="sequence caution" evidence="20">
    <conflict type="erroneous initiation">
        <sequence resource="EMBL-CDS" id="BAC28797"/>
    </conflict>
</comment>
<sequence>MTSTLDLDKGCTVEELLRGCIEAFDDSGKVRDPQLVRMFLMMHPWYIPSSQLASKLLHFYQQSRKDNSNSLQMKTCHLVRYWISAFPAEFDLNPELAEQIKELKALLDQEGNRRHSSLIDIESVPTYKWKRQVTQRNPVEQKKRKMSLLFDHLEPMELAEHLTYLEYRSFCKILFQDYHSFVTHGCTVDNPVLERFISLFNSVSQWVQLMILSKPTATQRALVITHFVHVAERLLQLQNFNTLMAVVGGLSHSSISRLKETHSHVSPDTIKLWEGLTELVTATGNYSNYRRRLAACVGFRFPILGVHLKDLVALQLALPDWLDPGRTRLNGAKMRQLFCILEELAMVTSLRPPVQANPDLLSLLTVSLDQYQTEDELYQLSLQREPRSKSSPTSPTSCTPPPRPPVLEEWTSVAKPKLDQALVAEHIEKMVESVFRNFDVDGDGHISQEEFQIIRGNFPYLSAFGDLDQNQDGCISREEMISYFLRSSSVLGGRMGFVHNFQESNSLRPVACRHCKALILGIYKQGLKCRACGVNCHKQCKERLSVECRRRAQSVSLEGSAPSPSPTHTHHRAFSFSLPRPGRRSSRPPEIREEEVQSVEDGVFDIHL</sequence>
<protein>
    <recommendedName>
        <fullName>RAS guanyl-releasing protein 2</fullName>
    </recommendedName>
    <alternativeName>
        <fullName>Calcium and DAG-regulated guanine nucleotide exchange factor I</fullName>
        <shortName>CalDAG-GEFI</shortName>
    </alternativeName>
    <alternativeName>
        <fullName>F25B3.3 kinase-like protein</fullName>
    </alternativeName>
</protein>
<gene>
    <name type="primary">Rasgrp2</name>
</gene>